<sequence length="185" mass="20759">MVLSSQLSVGMFISTKDGLYKVVAVSKVTGNKGESFIKASLKAADSDVIVERNFKIGQEIKEAQFESRNLEYLYIEDENFLFLDLGNYEKIYISKEIMKDNFLFLKAGVTVSAMVYDDVVFSIELPHFLELMVSKTDFPGDSLLITGGTKKALLETGVEITVPPFVEIGDIIKIDTRTCEYIQRV</sequence>
<evidence type="ECO:0000250" key="1"/>
<evidence type="ECO:0000305" key="2"/>
<keyword id="KW-0963">Cytoplasm</keyword>
<keyword id="KW-0251">Elongation factor</keyword>
<keyword id="KW-0648">Protein biosynthesis</keyword>
<gene>
    <name type="primary">efp1</name>
    <name type="ordered locus">CCA_00552</name>
</gene>
<proteinExistence type="inferred from homology"/>
<accession>Q822X6</accession>
<name>EFP1_CHLCV</name>
<dbReference type="EMBL" id="AE015925">
    <property type="protein sequence ID" value="AAP05295.1"/>
    <property type="molecule type" value="Genomic_DNA"/>
</dbReference>
<dbReference type="RefSeq" id="WP_011006510.1">
    <property type="nucleotide sequence ID" value="NC_003361.3"/>
</dbReference>
<dbReference type="SMR" id="Q822X6"/>
<dbReference type="STRING" id="227941.CCA_00552"/>
<dbReference type="KEGG" id="cca:CCA_00552"/>
<dbReference type="eggNOG" id="COG0231">
    <property type="taxonomic scope" value="Bacteria"/>
</dbReference>
<dbReference type="HOGENOM" id="CLU_074944_0_1_0"/>
<dbReference type="OrthoDB" id="9801844at2"/>
<dbReference type="UniPathway" id="UPA00345"/>
<dbReference type="Proteomes" id="UP000002193">
    <property type="component" value="Chromosome"/>
</dbReference>
<dbReference type="GO" id="GO:0005737">
    <property type="term" value="C:cytoplasm"/>
    <property type="evidence" value="ECO:0007669"/>
    <property type="project" value="UniProtKB-SubCell"/>
</dbReference>
<dbReference type="GO" id="GO:0003746">
    <property type="term" value="F:translation elongation factor activity"/>
    <property type="evidence" value="ECO:0007669"/>
    <property type="project" value="UniProtKB-UniRule"/>
</dbReference>
<dbReference type="GO" id="GO:0043043">
    <property type="term" value="P:peptide biosynthetic process"/>
    <property type="evidence" value="ECO:0007669"/>
    <property type="project" value="InterPro"/>
</dbReference>
<dbReference type="CDD" id="cd04470">
    <property type="entry name" value="S1_EF-P_repeat_1"/>
    <property type="match status" value="1"/>
</dbReference>
<dbReference type="CDD" id="cd05794">
    <property type="entry name" value="S1_EF-P_repeat_2"/>
    <property type="match status" value="1"/>
</dbReference>
<dbReference type="FunFam" id="2.40.50.140:FF:000004">
    <property type="entry name" value="Elongation factor P"/>
    <property type="match status" value="1"/>
</dbReference>
<dbReference type="Gene3D" id="2.30.30.30">
    <property type="match status" value="1"/>
</dbReference>
<dbReference type="Gene3D" id="2.40.50.140">
    <property type="entry name" value="Nucleic acid-binding proteins"/>
    <property type="match status" value="2"/>
</dbReference>
<dbReference type="HAMAP" id="MF_00141">
    <property type="entry name" value="EF_P"/>
    <property type="match status" value="1"/>
</dbReference>
<dbReference type="InterPro" id="IPR015365">
    <property type="entry name" value="Elong-fact-P_C"/>
</dbReference>
<dbReference type="InterPro" id="IPR012340">
    <property type="entry name" value="NA-bd_OB-fold"/>
</dbReference>
<dbReference type="InterPro" id="IPR014722">
    <property type="entry name" value="Rib_uL2_dom2"/>
</dbReference>
<dbReference type="InterPro" id="IPR020599">
    <property type="entry name" value="Transl_elong_fac_P/YeiP"/>
</dbReference>
<dbReference type="InterPro" id="IPR013185">
    <property type="entry name" value="Transl_elong_KOW-like"/>
</dbReference>
<dbReference type="InterPro" id="IPR001059">
    <property type="entry name" value="Transl_elong_P/YeiP_cen"/>
</dbReference>
<dbReference type="InterPro" id="IPR013852">
    <property type="entry name" value="Transl_elong_P/YeiP_CS"/>
</dbReference>
<dbReference type="InterPro" id="IPR011768">
    <property type="entry name" value="Transl_elongation_fac_P"/>
</dbReference>
<dbReference type="InterPro" id="IPR008991">
    <property type="entry name" value="Translation_prot_SH3-like_sf"/>
</dbReference>
<dbReference type="NCBIfam" id="NF009090">
    <property type="entry name" value="PRK12426.1"/>
    <property type="match status" value="1"/>
</dbReference>
<dbReference type="PANTHER" id="PTHR30053">
    <property type="entry name" value="ELONGATION FACTOR P"/>
    <property type="match status" value="1"/>
</dbReference>
<dbReference type="PANTHER" id="PTHR30053:SF12">
    <property type="entry name" value="ELONGATION FACTOR P (EF-P) FAMILY PROTEIN"/>
    <property type="match status" value="1"/>
</dbReference>
<dbReference type="Pfam" id="PF01132">
    <property type="entry name" value="EFP"/>
    <property type="match status" value="1"/>
</dbReference>
<dbReference type="Pfam" id="PF08207">
    <property type="entry name" value="EFP_N"/>
    <property type="match status" value="1"/>
</dbReference>
<dbReference type="Pfam" id="PF09285">
    <property type="entry name" value="Elong-fact-P_C"/>
    <property type="match status" value="1"/>
</dbReference>
<dbReference type="PIRSF" id="PIRSF005901">
    <property type="entry name" value="EF-P"/>
    <property type="match status" value="1"/>
</dbReference>
<dbReference type="SMART" id="SM01185">
    <property type="entry name" value="EFP"/>
    <property type="match status" value="1"/>
</dbReference>
<dbReference type="SMART" id="SM00841">
    <property type="entry name" value="Elong-fact-P_C"/>
    <property type="match status" value="1"/>
</dbReference>
<dbReference type="SUPFAM" id="SSF50249">
    <property type="entry name" value="Nucleic acid-binding proteins"/>
    <property type="match status" value="2"/>
</dbReference>
<dbReference type="SUPFAM" id="SSF50104">
    <property type="entry name" value="Translation proteins SH3-like domain"/>
    <property type="match status" value="1"/>
</dbReference>
<dbReference type="PROSITE" id="PS01275">
    <property type="entry name" value="EFP"/>
    <property type="match status" value="1"/>
</dbReference>
<feature type="chain" id="PRO_0000094225" description="Elongation factor P 1">
    <location>
        <begin position="1"/>
        <end position="185"/>
    </location>
</feature>
<organism>
    <name type="scientific">Chlamydia caviae (strain ATCC VR-813 / DSM 19441 / 03DC25 / GPIC)</name>
    <name type="common">Chlamydophila caviae</name>
    <dbReference type="NCBI Taxonomy" id="227941"/>
    <lineage>
        <taxon>Bacteria</taxon>
        <taxon>Pseudomonadati</taxon>
        <taxon>Chlamydiota</taxon>
        <taxon>Chlamydiia</taxon>
        <taxon>Chlamydiales</taxon>
        <taxon>Chlamydiaceae</taxon>
        <taxon>Chlamydia/Chlamydophila group</taxon>
        <taxon>Chlamydia</taxon>
    </lineage>
</organism>
<reference key="1">
    <citation type="journal article" date="2003" name="Nucleic Acids Res.">
        <title>Genome sequence of Chlamydophila caviae (Chlamydia psittaci GPIC): examining the role of niche-specific genes in the evolution of the Chlamydiaceae.</title>
        <authorList>
            <person name="Read T.D."/>
            <person name="Myers G.S.A."/>
            <person name="Brunham R.C."/>
            <person name="Nelson W.C."/>
            <person name="Paulsen I.T."/>
            <person name="Heidelberg J.F."/>
            <person name="Holtzapple E.K."/>
            <person name="Khouri H.M."/>
            <person name="Federova N.B."/>
            <person name="Carty H.A."/>
            <person name="Umayam L.A."/>
            <person name="Haft D.H."/>
            <person name="Peterson J.D."/>
            <person name="Beanan M.J."/>
            <person name="White O."/>
            <person name="Salzberg S.L."/>
            <person name="Hsia R.-C."/>
            <person name="McClarty G."/>
            <person name="Rank R.G."/>
            <person name="Bavoil P.M."/>
            <person name="Fraser C.M."/>
        </authorList>
    </citation>
    <scope>NUCLEOTIDE SEQUENCE [LARGE SCALE GENOMIC DNA]</scope>
    <source>
        <strain>ATCC VR-813 / DSM 19441 / 03DC25 / GPIC</strain>
    </source>
</reference>
<protein>
    <recommendedName>
        <fullName>Elongation factor P 1</fullName>
        <shortName>EF-P 1</shortName>
    </recommendedName>
</protein>
<comment type="function">
    <text evidence="1">Involved in peptide bond synthesis. Stimulates efficient translation and peptide-bond synthesis on native or reconstituted 70S ribosomes in vitro. Probably functions indirectly by altering the affinity of the ribosome for aminoacyl-tRNA, thus increasing their reactivity as acceptors for peptidyl transferase (By similarity).</text>
</comment>
<comment type="pathway">
    <text>Protein biosynthesis; polypeptide chain elongation.</text>
</comment>
<comment type="subcellular location">
    <subcellularLocation>
        <location evidence="1">Cytoplasm</location>
    </subcellularLocation>
</comment>
<comment type="similarity">
    <text evidence="2">Belongs to the elongation factor P family.</text>
</comment>